<proteinExistence type="inferred from homology"/>
<keyword id="KW-0963">Cytoplasm</keyword>
<keyword id="KW-0269">Exonuclease</keyword>
<keyword id="KW-0378">Hydrolase</keyword>
<keyword id="KW-0540">Nuclease</keyword>
<keyword id="KW-1185">Reference proteome</keyword>
<organism>
    <name type="scientific">Pseudomonas syringae pv. tomato (strain ATCC BAA-871 / DC3000)</name>
    <dbReference type="NCBI Taxonomy" id="223283"/>
    <lineage>
        <taxon>Bacteria</taxon>
        <taxon>Pseudomonadati</taxon>
        <taxon>Pseudomonadota</taxon>
        <taxon>Gammaproteobacteria</taxon>
        <taxon>Pseudomonadales</taxon>
        <taxon>Pseudomonadaceae</taxon>
        <taxon>Pseudomonas</taxon>
    </lineage>
</organism>
<comment type="function">
    <text evidence="1">3'-to-5' exoribonuclease specific for small oligoribonucleotides.</text>
</comment>
<comment type="subcellular location">
    <subcellularLocation>
        <location evidence="1">Cytoplasm</location>
    </subcellularLocation>
</comment>
<comment type="similarity">
    <text evidence="1">Belongs to the oligoribonuclease family.</text>
</comment>
<reference key="1">
    <citation type="journal article" date="2003" name="Proc. Natl. Acad. Sci. U.S.A.">
        <title>The complete genome sequence of the Arabidopsis and tomato pathogen Pseudomonas syringae pv. tomato DC3000.</title>
        <authorList>
            <person name="Buell C.R."/>
            <person name="Joardar V."/>
            <person name="Lindeberg M."/>
            <person name="Selengut J."/>
            <person name="Paulsen I.T."/>
            <person name="Gwinn M.L."/>
            <person name="Dodson R.J."/>
            <person name="DeBoy R.T."/>
            <person name="Durkin A.S."/>
            <person name="Kolonay J.F."/>
            <person name="Madupu R."/>
            <person name="Daugherty S.C."/>
            <person name="Brinkac L.M."/>
            <person name="Beanan M.J."/>
            <person name="Haft D.H."/>
            <person name="Nelson W.C."/>
            <person name="Davidsen T.M."/>
            <person name="Zafar N."/>
            <person name="Zhou L."/>
            <person name="Liu J."/>
            <person name="Yuan Q."/>
            <person name="Khouri H.M."/>
            <person name="Fedorova N.B."/>
            <person name="Tran B."/>
            <person name="Russell D."/>
            <person name="Berry K.J."/>
            <person name="Utterback T.R."/>
            <person name="Van Aken S.E."/>
            <person name="Feldblyum T.V."/>
            <person name="D'Ascenzo M."/>
            <person name="Deng W.-L."/>
            <person name="Ramos A.R."/>
            <person name="Alfano J.R."/>
            <person name="Cartinhour S."/>
            <person name="Chatterjee A.K."/>
            <person name="Delaney T.P."/>
            <person name="Lazarowitz S.G."/>
            <person name="Martin G.B."/>
            <person name="Schneider D.J."/>
            <person name="Tang X."/>
            <person name="Bender C.L."/>
            <person name="White O."/>
            <person name="Fraser C.M."/>
            <person name="Collmer A."/>
        </authorList>
    </citation>
    <scope>NUCLEOTIDE SEQUENCE [LARGE SCALE GENOMIC DNA]</scope>
    <source>
        <strain>ATCC BAA-871 / DC3000</strain>
    </source>
</reference>
<gene>
    <name evidence="1" type="primary">orn</name>
    <name type="ordered locus">PSPTO_4950</name>
</gene>
<accession>Q87VI6</accession>
<sequence>MQNKQNLIWIDLEMTGLDPDTDVIIEMATIITDSELNTLAEGPVIAVHQSDETLAKMDEWNTRQHGGSGLTQRVRESTISMADAEAQTLAFIKLWVPERSSPICGNSICQDRRFLYRHMPALENYFHYRNLDVSTLKELAARWAPELKFKKGSTHLALDDIRESIAELRFYREHFIKP</sequence>
<feature type="chain" id="PRO_0000111064" description="Oligoribonuclease">
    <location>
        <begin position="1"/>
        <end position="178"/>
    </location>
</feature>
<feature type="domain" description="Exonuclease" evidence="1">
    <location>
        <begin position="7"/>
        <end position="168"/>
    </location>
</feature>
<feature type="active site" evidence="1">
    <location>
        <position position="128"/>
    </location>
</feature>
<name>ORN_PSESM</name>
<protein>
    <recommendedName>
        <fullName evidence="1">Oligoribonuclease</fullName>
        <ecNumber evidence="1">3.1.15.-</ecNumber>
    </recommendedName>
</protein>
<evidence type="ECO:0000255" key="1">
    <source>
        <dbReference type="HAMAP-Rule" id="MF_00045"/>
    </source>
</evidence>
<dbReference type="EC" id="3.1.15.-" evidence="1"/>
<dbReference type="EMBL" id="AE016853">
    <property type="protein sequence ID" value="AAO58378.1"/>
    <property type="molecule type" value="Genomic_DNA"/>
</dbReference>
<dbReference type="RefSeq" id="NP_794683.1">
    <property type="nucleotide sequence ID" value="NC_004578.1"/>
</dbReference>
<dbReference type="RefSeq" id="WP_005763007.1">
    <property type="nucleotide sequence ID" value="NC_004578.1"/>
</dbReference>
<dbReference type="SMR" id="Q87VI6"/>
<dbReference type="STRING" id="223283.PSPTO_4950"/>
<dbReference type="GeneID" id="1186635"/>
<dbReference type="KEGG" id="pst:PSPTO_4950"/>
<dbReference type="PATRIC" id="fig|223283.9.peg.5064"/>
<dbReference type="eggNOG" id="COG1949">
    <property type="taxonomic scope" value="Bacteria"/>
</dbReference>
<dbReference type="HOGENOM" id="CLU_064761_2_0_6"/>
<dbReference type="OrthoDB" id="9801329at2"/>
<dbReference type="PhylomeDB" id="Q87VI6"/>
<dbReference type="Proteomes" id="UP000002515">
    <property type="component" value="Chromosome"/>
</dbReference>
<dbReference type="GO" id="GO:0005737">
    <property type="term" value="C:cytoplasm"/>
    <property type="evidence" value="ECO:0007669"/>
    <property type="project" value="UniProtKB-SubCell"/>
</dbReference>
<dbReference type="GO" id="GO:0000175">
    <property type="term" value="F:3'-5'-RNA exonuclease activity"/>
    <property type="evidence" value="ECO:0007669"/>
    <property type="project" value="InterPro"/>
</dbReference>
<dbReference type="GO" id="GO:0003676">
    <property type="term" value="F:nucleic acid binding"/>
    <property type="evidence" value="ECO:0007669"/>
    <property type="project" value="InterPro"/>
</dbReference>
<dbReference type="GO" id="GO:0006259">
    <property type="term" value="P:DNA metabolic process"/>
    <property type="evidence" value="ECO:0007669"/>
    <property type="project" value="UniProtKB-ARBA"/>
</dbReference>
<dbReference type="CDD" id="cd06135">
    <property type="entry name" value="Orn"/>
    <property type="match status" value="1"/>
</dbReference>
<dbReference type="FunFam" id="3.30.420.10:FF:000003">
    <property type="entry name" value="Oligoribonuclease"/>
    <property type="match status" value="1"/>
</dbReference>
<dbReference type="Gene3D" id="3.30.420.10">
    <property type="entry name" value="Ribonuclease H-like superfamily/Ribonuclease H"/>
    <property type="match status" value="1"/>
</dbReference>
<dbReference type="HAMAP" id="MF_00045">
    <property type="entry name" value="Oligoribonuclease"/>
    <property type="match status" value="1"/>
</dbReference>
<dbReference type="InterPro" id="IPR013520">
    <property type="entry name" value="Exonuclease_RNaseT/DNA_pol3"/>
</dbReference>
<dbReference type="InterPro" id="IPR022894">
    <property type="entry name" value="Oligoribonuclease"/>
</dbReference>
<dbReference type="InterPro" id="IPR012337">
    <property type="entry name" value="RNaseH-like_sf"/>
</dbReference>
<dbReference type="InterPro" id="IPR036397">
    <property type="entry name" value="RNaseH_sf"/>
</dbReference>
<dbReference type="NCBIfam" id="NF003765">
    <property type="entry name" value="PRK05359.1"/>
    <property type="match status" value="1"/>
</dbReference>
<dbReference type="PANTHER" id="PTHR11046">
    <property type="entry name" value="OLIGORIBONUCLEASE, MITOCHONDRIAL"/>
    <property type="match status" value="1"/>
</dbReference>
<dbReference type="PANTHER" id="PTHR11046:SF0">
    <property type="entry name" value="OLIGORIBONUCLEASE, MITOCHONDRIAL"/>
    <property type="match status" value="1"/>
</dbReference>
<dbReference type="Pfam" id="PF00929">
    <property type="entry name" value="RNase_T"/>
    <property type="match status" value="1"/>
</dbReference>
<dbReference type="SMART" id="SM00479">
    <property type="entry name" value="EXOIII"/>
    <property type="match status" value="1"/>
</dbReference>
<dbReference type="SUPFAM" id="SSF53098">
    <property type="entry name" value="Ribonuclease H-like"/>
    <property type="match status" value="1"/>
</dbReference>